<dbReference type="EMBL" id="U29144">
    <property type="protein sequence ID" value="AAB08031.1"/>
    <property type="molecule type" value="Genomic_DNA"/>
</dbReference>
<dbReference type="SMR" id="Q64897"/>
<dbReference type="Proteomes" id="UP000008172">
    <property type="component" value="Genome"/>
</dbReference>
<dbReference type="GO" id="GO:0043657">
    <property type="term" value="C:host cell"/>
    <property type="evidence" value="ECO:0007669"/>
    <property type="project" value="GOC"/>
</dbReference>
<dbReference type="GO" id="GO:0030430">
    <property type="term" value="C:host cell cytoplasm"/>
    <property type="evidence" value="ECO:0007669"/>
    <property type="project" value="UniProtKB-SubCell"/>
</dbReference>
<dbReference type="GO" id="GO:0039619">
    <property type="term" value="C:T=4 icosahedral viral capsid"/>
    <property type="evidence" value="ECO:0007669"/>
    <property type="project" value="UniProtKB-UniRule"/>
</dbReference>
<dbReference type="GO" id="GO:0003677">
    <property type="term" value="F:DNA binding"/>
    <property type="evidence" value="ECO:0007669"/>
    <property type="project" value="UniProtKB-UniRule"/>
</dbReference>
<dbReference type="GO" id="GO:0003723">
    <property type="term" value="F:RNA binding"/>
    <property type="evidence" value="ECO:0007669"/>
    <property type="project" value="UniProtKB-UniRule"/>
</dbReference>
<dbReference type="GO" id="GO:0005198">
    <property type="term" value="F:structural molecule activity"/>
    <property type="evidence" value="ECO:0007669"/>
    <property type="project" value="UniProtKB-UniRule"/>
</dbReference>
<dbReference type="GO" id="GO:0075521">
    <property type="term" value="P:microtubule-dependent intracellular transport of viral material towards nucleus"/>
    <property type="evidence" value="ECO:0007669"/>
    <property type="project" value="UniProtKB-UniRule"/>
</dbReference>
<dbReference type="GO" id="GO:0046718">
    <property type="term" value="P:symbiont entry into host cell"/>
    <property type="evidence" value="ECO:0007669"/>
    <property type="project" value="UniProtKB-UniRule"/>
</dbReference>
<dbReference type="GO" id="GO:0075732">
    <property type="term" value="P:viral penetration into host nucleus"/>
    <property type="evidence" value="ECO:0007669"/>
    <property type="project" value="UniProtKB-UniRule"/>
</dbReference>
<dbReference type="Gene3D" id="1.10.4090.10">
    <property type="entry name" value="Viral capsid, core domain supefamily, Hepatitis B virus"/>
    <property type="match status" value="1"/>
</dbReference>
<dbReference type="HAMAP" id="MF_04076">
    <property type="entry name" value="HBV_HBEAG"/>
    <property type="match status" value="1"/>
</dbReference>
<dbReference type="InterPro" id="IPR002006">
    <property type="entry name" value="Hepatitis_core"/>
</dbReference>
<dbReference type="InterPro" id="IPR036459">
    <property type="entry name" value="Viral_capsid_core_dom_sf_HBV"/>
</dbReference>
<dbReference type="Pfam" id="PF00906">
    <property type="entry name" value="Hepatitis_core"/>
    <property type="match status" value="2"/>
</dbReference>
<dbReference type="SUPFAM" id="SSF47852">
    <property type="entry name" value="Hepatitis B viral capsid (hbcag)"/>
    <property type="match status" value="1"/>
</dbReference>
<gene>
    <name evidence="1" type="primary">C</name>
</gene>
<keyword id="KW-0024">Alternative initiation</keyword>
<keyword id="KW-0167">Capsid protein</keyword>
<keyword id="KW-1176">Cytoplasmic inwards viral transport</keyword>
<keyword id="KW-0238">DNA-binding</keyword>
<keyword id="KW-1035">Host cytoplasm</keyword>
<keyword id="KW-0945">Host-virus interaction</keyword>
<keyword id="KW-1177">Microtubular inwards viral transport</keyword>
<keyword id="KW-0597">Phosphoprotein</keyword>
<keyword id="KW-0677">Repeat</keyword>
<keyword id="KW-0694">RNA-binding</keyword>
<keyword id="KW-1144">T=4 icosahedral capsid protein</keyword>
<keyword id="KW-1163">Viral penetration into host nucleus</keyword>
<keyword id="KW-0946">Virion</keyword>
<keyword id="KW-1160">Virus entry into host cell</keyword>
<accession>Q64897</accession>
<evidence type="ECO:0000255" key="1">
    <source>
        <dbReference type="HAMAP-Rule" id="MF_04076"/>
    </source>
</evidence>
<evidence type="ECO:0000256" key="2">
    <source>
        <dbReference type="SAM" id="MobiDB-lite"/>
    </source>
</evidence>
<proteinExistence type="inferred from homology"/>
<protein>
    <recommendedName>
        <fullName evidence="1">Capsid protein</fullName>
    </recommendedName>
    <alternativeName>
        <fullName evidence="1">Core antigen</fullName>
    </alternativeName>
    <alternativeName>
        <fullName evidence="1">Core protein</fullName>
    </alternativeName>
    <alternativeName>
        <fullName evidence="1">HBcAg</fullName>
    </alternativeName>
    <alternativeName>
        <fullName evidence="1">p21.5</fullName>
    </alternativeName>
</protein>
<organismHost>
    <name type="scientific">Urocitellus parryii kennicottii</name>
    <dbReference type="NCBI Taxonomy" id="259022"/>
</organismHost>
<sequence>MDIDPYKEFGSSYQLLNFLPLDFFPELNALVDTATALYEEELTGREHCSPHHTAIRQALVCWEELTRLIAWMSANINSEEVRRVIVAHVNDTWGLKVRQNLWFHLSCLTFGQHTVQEFLVSFGVRIRTPAPYRPPNAPILSTLPEHTVIRRRGSARVVRSPRRRTPSPRRRRSQSPRRRPQSPASNC</sequence>
<comment type="function">
    <text evidence="1">Self assembles to form an icosahedral capsid. Most capsids appear to be large particles with an icosahedral symmetry of T=4 and consist of 240 copies of capsid protein, though a fraction forms smaller T=3 particles consisting of 180 capsid proteins. Entering capsids are transported along microtubules to the nucleus. Phosphorylation of the capsid is thought to induce exposure of nuclear localization signal in the C-terminal portion of the capsid protein that allows binding to the nuclear pore complex via the importin (karyopherin-) alpha and beta. Capsids are imported in intact form through the nuclear pore into the nuclear basket, where it probably binds NUP153. Only capsids that contain the mature viral genome can release the viral DNA and capsid protein into the nucleoplasm. Immature capsids get stuck in the basket. Capsids encapsulate the pre-genomic RNA and the P protein. Pre-genomic RNA is reverse-transcribed into DNA while the capsid is still in the cytoplasm. The capsid can then either be directed to the nucleus, providing more genomes for transcription, or bud through the endoplasmic reticulum to provide new virions.</text>
</comment>
<comment type="subunit">
    <text evidence="1">Homodimerizes, then multimerizes. Interacts with cytosol exposed regions of viral L glycoprotein present in the reticulum-to-Golgi compartment. Interacts with human FLNB. Phosphorylated form interacts with host importin alpha; this interaction depends on the exposure of the NLS, which itself depends upon genome maturation and/or phosphorylation of the capsid protein. Interacts with host NUP153.</text>
</comment>
<comment type="subcellular location">
    <subcellularLocation>
        <location evidence="1">Virion</location>
    </subcellularLocation>
    <subcellularLocation>
        <location evidence="1">Host cytoplasm</location>
    </subcellularLocation>
</comment>
<comment type="alternative products">
    <event type="alternative initiation"/>
    <isoform>
        <id>Q64897-1</id>
        <name>Capsid protein</name>
        <sequence type="displayed"/>
    </isoform>
    <isoform>
        <id>Q64896-1</id>
        <name>External core antigen</name>
        <sequence type="external"/>
    </isoform>
</comment>
<comment type="PTM">
    <text evidence="1">Phosphorylated by host SRPK1, SRPK2, and maybe protein kinase C or GAPDH. Phosphorylation is critical for pregenomic RNA packaging. Protein kinase C phosphorylation is stimulated by HBx protein and may play a role in transport of the viral genome to the nucleus at the late step during the viral replication cycle.</text>
</comment>
<comment type="similarity">
    <text evidence="1">Belongs to the orthohepadnavirus core antigen family.</text>
</comment>
<organism>
    <name type="scientific">Arctic squirrel hepatitis virus</name>
    <name type="common">ASHV</name>
    <dbReference type="NCBI Taxonomy" id="41952"/>
    <lineage>
        <taxon>Viruses</taxon>
        <taxon>Riboviria</taxon>
        <taxon>Pararnavirae</taxon>
        <taxon>Artverviricota</taxon>
        <taxon>Revtraviricetes</taxon>
        <taxon>Blubervirales</taxon>
        <taxon>Hepadnaviridae</taxon>
        <taxon>Orthohepadnavirus</taxon>
        <taxon>Ground squirrel hepatitis virus (strain 27)</taxon>
    </lineage>
</organism>
<feature type="chain" id="PRO_0000324350" description="Capsid protein">
    <location>
        <begin position="1"/>
        <end position="187"/>
    </location>
</feature>
<feature type="repeat" description="1">
    <location>
        <begin position="160"/>
        <end position="164"/>
    </location>
</feature>
<feature type="repeat" description="2">
    <location>
        <begin position="167"/>
        <end position="171"/>
    </location>
</feature>
<feature type="repeat" description="3">
    <location>
        <begin position="175"/>
        <end position="179"/>
    </location>
</feature>
<feature type="region of interest" description="Disordered" evidence="2">
    <location>
        <begin position="151"/>
        <end position="187"/>
    </location>
</feature>
<feature type="region of interest" description="3 X 5 AA repeats of S-P-R-R-R">
    <location>
        <begin position="160"/>
        <end position="179"/>
    </location>
</feature>
<feature type="region of interest" description="RNA binding" evidence="1">
    <location>
        <begin position="181"/>
        <end position="187"/>
    </location>
</feature>
<feature type="short sequence motif" description="Bipartite nuclear localization signal" evidence="1">
    <location>
        <begin position="163"/>
        <end position="180"/>
    </location>
</feature>
<feature type="compositionally biased region" description="Basic residues" evidence="2">
    <location>
        <begin position="151"/>
        <end position="180"/>
    </location>
</feature>
<feature type="modified residue" description="Phosphoserine; by host" evidence="1">
    <location>
        <position position="160"/>
    </location>
</feature>
<feature type="modified residue" description="Phosphoserine; by host" evidence="1">
    <location>
        <position position="167"/>
    </location>
</feature>
<feature type="modified residue" description="Phosphoserine; by host" evidence="1">
    <location>
        <position position="175"/>
    </location>
</feature>
<name>CAPSD_ASHV</name>
<reference key="1">
    <citation type="journal article" date="1996" name="J. Virol.">
        <title>A new hepadnavirus endemic in arctic ground squirrels in Alaska.</title>
        <authorList>
            <person name="Testut P."/>
            <person name="Renard C.A."/>
            <person name="Terradillos O."/>
            <person name="Vitvitski-Trepo L."/>
            <person name="Tekaia F."/>
            <person name="Degott C."/>
            <person name="Blake J."/>
            <person name="Boyer B."/>
            <person name="Buendia M.A."/>
        </authorList>
    </citation>
    <scope>NUCLEOTIDE SEQUENCE [GENOMIC DNA]</scope>
</reference>